<gene>
    <name evidence="1" type="primary">ttcA</name>
    <name type="ordered locus">VV1681</name>
</gene>
<sequence length="310" mass="35185">MTEQILERTKAQQYNFNKLQKRIRRNTGQAIADFNMIEDGDRIMVCLSGGKDSFTMLDILMSLQKSAPISFSLVAVNLDQKQPGFPAHVLPEYLESLGVEYKIVEEDTYSIVQDKIPEGKTTCSLCSRLRRGILYRTAKELGATKIALGHHRDDILETLFLNMFYGGKMKGMPPKLVSDNGEHVVIRPLAYCREKDIIKYSDMAGYPIIPCNLCGSQPNLQRQNIKQMLNDWDKRFPGRIETMFRAMQNVVPSHLADFELFDFKSINKDSGVINGGDIGFDKEEMPVATVEDEDMVQEFDPSLKLDVTNI</sequence>
<feature type="chain" id="PRO_0000348867" description="tRNA-cytidine(32) 2-sulfurtransferase">
    <location>
        <begin position="1"/>
        <end position="310"/>
    </location>
</feature>
<feature type="short sequence motif" description="PP-loop motif" evidence="1">
    <location>
        <begin position="48"/>
        <end position="53"/>
    </location>
</feature>
<feature type="binding site" evidence="1">
    <location>
        <position position="123"/>
    </location>
    <ligand>
        <name>[4Fe-4S] cluster</name>
        <dbReference type="ChEBI" id="CHEBI:49883"/>
    </ligand>
</feature>
<feature type="binding site" evidence="1">
    <location>
        <position position="126"/>
    </location>
    <ligand>
        <name>[4Fe-4S] cluster</name>
        <dbReference type="ChEBI" id="CHEBI:49883"/>
    </ligand>
</feature>
<feature type="binding site" evidence="1">
    <location>
        <position position="214"/>
    </location>
    <ligand>
        <name>[4Fe-4S] cluster</name>
        <dbReference type="ChEBI" id="CHEBI:49883"/>
    </ligand>
</feature>
<protein>
    <recommendedName>
        <fullName evidence="1">tRNA-cytidine(32) 2-sulfurtransferase</fullName>
        <ecNumber evidence="1">2.8.1.-</ecNumber>
    </recommendedName>
    <alternativeName>
        <fullName evidence="1">Two-thiocytidine biosynthesis protein A</fullName>
    </alternativeName>
    <alternativeName>
        <fullName evidence="1">tRNA 2-thiocytidine biosynthesis protein TtcA</fullName>
    </alternativeName>
</protein>
<comment type="function">
    <text evidence="1">Catalyzes the ATP-dependent 2-thiolation of cytidine in position 32 of tRNA, to form 2-thiocytidine (s(2)C32). The sulfur atoms are provided by the cysteine/cysteine desulfurase (IscS) system.</text>
</comment>
<comment type="catalytic activity">
    <reaction evidence="1">
        <text>cytidine(32) in tRNA + S-sulfanyl-L-cysteinyl-[cysteine desulfurase] + AH2 + ATP = 2-thiocytidine(32) in tRNA + L-cysteinyl-[cysteine desulfurase] + A + AMP + diphosphate + H(+)</text>
        <dbReference type="Rhea" id="RHEA:57048"/>
        <dbReference type="Rhea" id="RHEA-COMP:10288"/>
        <dbReference type="Rhea" id="RHEA-COMP:12157"/>
        <dbReference type="Rhea" id="RHEA-COMP:12158"/>
        <dbReference type="Rhea" id="RHEA-COMP:14821"/>
        <dbReference type="ChEBI" id="CHEBI:13193"/>
        <dbReference type="ChEBI" id="CHEBI:15378"/>
        <dbReference type="ChEBI" id="CHEBI:17499"/>
        <dbReference type="ChEBI" id="CHEBI:29950"/>
        <dbReference type="ChEBI" id="CHEBI:30616"/>
        <dbReference type="ChEBI" id="CHEBI:33019"/>
        <dbReference type="ChEBI" id="CHEBI:61963"/>
        <dbReference type="ChEBI" id="CHEBI:82748"/>
        <dbReference type="ChEBI" id="CHEBI:141453"/>
        <dbReference type="ChEBI" id="CHEBI:456215"/>
    </reaction>
    <physiologicalReaction direction="left-to-right" evidence="1">
        <dbReference type="Rhea" id="RHEA:57049"/>
    </physiologicalReaction>
</comment>
<comment type="cofactor">
    <cofactor evidence="1">
        <name>Mg(2+)</name>
        <dbReference type="ChEBI" id="CHEBI:18420"/>
    </cofactor>
</comment>
<comment type="cofactor">
    <cofactor evidence="1">
        <name>[4Fe-4S] cluster</name>
        <dbReference type="ChEBI" id="CHEBI:49883"/>
    </cofactor>
    <text evidence="1">Binds 1 [4Fe-4S] cluster per subunit. The cluster is chelated by three Cys residues, the fourth Fe has a free coordination site that may bind a sulfur atom transferred from the persulfide of IscS.</text>
</comment>
<comment type="pathway">
    <text evidence="1">tRNA modification.</text>
</comment>
<comment type="subunit">
    <text evidence="1">Homodimer.</text>
</comment>
<comment type="subcellular location">
    <subcellularLocation>
        <location evidence="1">Cytoplasm</location>
    </subcellularLocation>
</comment>
<comment type="miscellaneous">
    <text evidence="1">The thiolation reaction likely consists of two steps: a first activation step by ATP to form an adenylated intermediate of the target base of tRNA, and a second nucleophilic substitution step of the sulfur (S) atom supplied by the hydrosulfide attached to the Fe-S cluster.</text>
</comment>
<comment type="similarity">
    <text evidence="1">Belongs to the TtcA family.</text>
</comment>
<proteinExistence type="inferred from homology"/>
<name>TTCA_VIBVY</name>
<organism>
    <name type="scientific">Vibrio vulnificus (strain YJ016)</name>
    <dbReference type="NCBI Taxonomy" id="196600"/>
    <lineage>
        <taxon>Bacteria</taxon>
        <taxon>Pseudomonadati</taxon>
        <taxon>Pseudomonadota</taxon>
        <taxon>Gammaproteobacteria</taxon>
        <taxon>Vibrionales</taxon>
        <taxon>Vibrionaceae</taxon>
        <taxon>Vibrio</taxon>
    </lineage>
</organism>
<dbReference type="EC" id="2.8.1.-" evidence="1"/>
<dbReference type="EMBL" id="BA000037">
    <property type="protein sequence ID" value="BAC94445.1"/>
    <property type="molecule type" value="Genomic_DNA"/>
</dbReference>
<dbReference type="RefSeq" id="WP_011150276.1">
    <property type="nucleotide sequence ID" value="NC_005139.1"/>
</dbReference>
<dbReference type="SMR" id="Q7MKU7"/>
<dbReference type="STRING" id="672.VV93_v1c15710"/>
<dbReference type="KEGG" id="vvy:VV1681"/>
<dbReference type="PATRIC" id="fig|196600.6.peg.1657"/>
<dbReference type="eggNOG" id="COG0037">
    <property type="taxonomic scope" value="Bacteria"/>
</dbReference>
<dbReference type="HOGENOM" id="CLU_026481_0_0_6"/>
<dbReference type="Proteomes" id="UP000002675">
    <property type="component" value="Chromosome I"/>
</dbReference>
<dbReference type="GO" id="GO:0005737">
    <property type="term" value="C:cytoplasm"/>
    <property type="evidence" value="ECO:0007669"/>
    <property type="project" value="UniProtKB-SubCell"/>
</dbReference>
<dbReference type="GO" id="GO:0051539">
    <property type="term" value="F:4 iron, 4 sulfur cluster binding"/>
    <property type="evidence" value="ECO:0007669"/>
    <property type="project" value="UniProtKB-UniRule"/>
</dbReference>
<dbReference type="GO" id="GO:0005524">
    <property type="term" value="F:ATP binding"/>
    <property type="evidence" value="ECO:0007669"/>
    <property type="project" value="UniProtKB-UniRule"/>
</dbReference>
<dbReference type="GO" id="GO:0000287">
    <property type="term" value="F:magnesium ion binding"/>
    <property type="evidence" value="ECO:0007669"/>
    <property type="project" value="UniProtKB-UniRule"/>
</dbReference>
<dbReference type="GO" id="GO:0016783">
    <property type="term" value="F:sulfurtransferase activity"/>
    <property type="evidence" value="ECO:0007669"/>
    <property type="project" value="UniProtKB-UniRule"/>
</dbReference>
<dbReference type="GO" id="GO:0000049">
    <property type="term" value="F:tRNA binding"/>
    <property type="evidence" value="ECO:0007669"/>
    <property type="project" value="UniProtKB-KW"/>
</dbReference>
<dbReference type="GO" id="GO:0034227">
    <property type="term" value="P:tRNA thio-modification"/>
    <property type="evidence" value="ECO:0007669"/>
    <property type="project" value="UniProtKB-UniRule"/>
</dbReference>
<dbReference type="CDD" id="cd24138">
    <property type="entry name" value="TtcA-like"/>
    <property type="match status" value="1"/>
</dbReference>
<dbReference type="Gene3D" id="3.40.50.620">
    <property type="entry name" value="HUPs"/>
    <property type="match status" value="1"/>
</dbReference>
<dbReference type="HAMAP" id="MF_01850">
    <property type="entry name" value="TtcA"/>
    <property type="match status" value="1"/>
</dbReference>
<dbReference type="InterPro" id="IPR014729">
    <property type="entry name" value="Rossmann-like_a/b/a_fold"/>
</dbReference>
<dbReference type="InterPro" id="IPR011063">
    <property type="entry name" value="TilS/TtcA_N"/>
</dbReference>
<dbReference type="InterPro" id="IPR012089">
    <property type="entry name" value="tRNA_Cyd_32_2_STrfase"/>
</dbReference>
<dbReference type="InterPro" id="IPR035107">
    <property type="entry name" value="tRNA_thiolation_TtcA_Ctu1"/>
</dbReference>
<dbReference type="NCBIfam" id="NF007972">
    <property type="entry name" value="PRK10696.1"/>
    <property type="match status" value="1"/>
</dbReference>
<dbReference type="PANTHER" id="PTHR43686:SF1">
    <property type="entry name" value="AMINOTRAN_5 DOMAIN-CONTAINING PROTEIN"/>
    <property type="match status" value="1"/>
</dbReference>
<dbReference type="PANTHER" id="PTHR43686">
    <property type="entry name" value="SULFURTRANSFERASE-RELATED"/>
    <property type="match status" value="1"/>
</dbReference>
<dbReference type="Pfam" id="PF01171">
    <property type="entry name" value="ATP_bind_3"/>
    <property type="match status" value="1"/>
</dbReference>
<dbReference type="PIRSF" id="PIRSF004976">
    <property type="entry name" value="ATPase_YdaO"/>
    <property type="match status" value="1"/>
</dbReference>
<dbReference type="SUPFAM" id="SSF52402">
    <property type="entry name" value="Adenine nucleotide alpha hydrolases-like"/>
    <property type="match status" value="1"/>
</dbReference>
<accession>Q7MKU7</accession>
<evidence type="ECO:0000255" key="1">
    <source>
        <dbReference type="HAMAP-Rule" id="MF_01850"/>
    </source>
</evidence>
<keyword id="KW-0004">4Fe-4S</keyword>
<keyword id="KW-0067">ATP-binding</keyword>
<keyword id="KW-0963">Cytoplasm</keyword>
<keyword id="KW-0408">Iron</keyword>
<keyword id="KW-0411">Iron-sulfur</keyword>
<keyword id="KW-0460">Magnesium</keyword>
<keyword id="KW-0479">Metal-binding</keyword>
<keyword id="KW-0547">Nucleotide-binding</keyword>
<keyword id="KW-0694">RNA-binding</keyword>
<keyword id="KW-0808">Transferase</keyword>
<keyword id="KW-0819">tRNA processing</keyword>
<keyword id="KW-0820">tRNA-binding</keyword>
<reference key="1">
    <citation type="journal article" date="2003" name="Genome Res.">
        <title>Comparative genome analysis of Vibrio vulnificus, a marine pathogen.</title>
        <authorList>
            <person name="Chen C.-Y."/>
            <person name="Wu K.-M."/>
            <person name="Chang Y.-C."/>
            <person name="Chang C.-H."/>
            <person name="Tsai H.-C."/>
            <person name="Liao T.-L."/>
            <person name="Liu Y.-M."/>
            <person name="Chen H.-J."/>
            <person name="Shen A.B.-T."/>
            <person name="Li J.-C."/>
            <person name="Su T.-L."/>
            <person name="Shao C.-P."/>
            <person name="Lee C.-T."/>
            <person name="Hor L.-I."/>
            <person name="Tsai S.-F."/>
        </authorList>
    </citation>
    <scope>NUCLEOTIDE SEQUENCE [LARGE SCALE GENOMIC DNA]</scope>
    <source>
        <strain>YJ016</strain>
    </source>
</reference>